<keyword id="KW-0150">Chloroplast</keyword>
<keyword id="KW-0934">Plastid</keyword>
<evidence type="ECO:0000305" key="1"/>
<proteinExistence type="inferred from homology"/>
<geneLocation type="chloroplast"/>
<organism>
    <name type="scientific">Saccharum hybrid</name>
    <name type="common">Sugarcane</name>
    <dbReference type="NCBI Taxonomy" id="15819"/>
    <lineage>
        <taxon>Eukaryota</taxon>
        <taxon>Viridiplantae</taxon>
        <taxon>Streptophyta</taxon>
        <taxon>Embryophyta</taxon>
        <taxon>Tracheophyta</taxon>
        <taxon>Spermatophyta</taxon>
        <taxon>Magnoliopsida</taxon>
        <taxon>Liliopsida</taxon>
        <taxon>Poales</taxon>
        <taxon>Poaceae</taxon>
        <taxon>PACMAD clade</taxon>
        <taxon>Panicoideae</taxon>
        <taxon>Andropogonodae</taxon>
        <taxon>Andropogoneae</taxon>
        <taxon>Saccharinae</taxon>
        <taxon>Saccharum</taxon>
    </lineage>
</organism>
<dbReference type="EMBL" id="AE009947">
    <property type="protein sequence ID" value="AAT44664.1"/>
    <property type="molecule type" value="Genomic_DNA"/>
</dbReference>
<dbReference type="EMBL" id="AE009947">
    <property type="protein sequence ID" value="AAT44645.1"/>
    <property type="molecule type" value="Genomic_DNA"/>
</dbReference>
<dbReference type="GO" id="GO:0009507">
    <property type="term" value="C:chloroplast"/>
    <property type="evidence" value="ECO:0007669"/>
    <property type="project" value="UniProtKB-SubCell"/>
</dbReference>
<dbReference type="InterPro" id="IPR022546">
    <property type="entry name" value="Uncharacterised_Ycf68"/>
</dbReference>
<dbReference type="PANTHER" id="PTHR34890">
    <property type="entry name" value="ORF16-LACZ FUSION PROTEIN-RELATED"/>
    <property type="match status" value="1"/>
</dbReference>
<dbReference type="Pfam" id="PF10839">
    <property type="entry name" value="DUF2647"/>
    <property type="match status" value="1"/>
</dbReference>
<sequence>MAYSSCLNRSLKPNKLLLRRIDGAIQVRSHVDRTFYSLVGSGRSGGGPPRLLSSRESIHPLSVYGELSLEHRLRFVLNGKMEHLTTHLHRPRTTRSPLSFWGDGGIVPFEPFFHAFPGGLEKAVINRTSLILPS</sequence>
<accession>Q6L3C9</accession>
<gene>
    <name type="primary">ycf68-1</name>
    <name type="ordered locus">PS026</name>
</gene>
<gene>
    <name type="primary">ycf68-2</name>
    <name type="ordered locus">PS059</name>
</gene>
<protein>
    <recommendedName>
        <fullName>Uncharacterized protein ycf68</fullName>
    </recommendedName>
    <alternativeName>
        <fullName>ORF 134</fullName>
    </alternativeName>
</protein>
<name>YCF68_SACHY</name>
<reference key="1">
    <citation type="journal article" date="2004" name="Curr. Genet.">
        <title>Structural features and transcript-editing analysis of sugarcane (Saccharum officinarum L.) chloroplast genome.</title>
        <authorList>
            <person name="Calsa T. Jr."/>
            <person name="Carraro D.M."/>
            <person name="Benatti M.R."/>
            <person name="Barbosa A.C."/>
            <person name="Kitajima J.P."/>
            <person name="Carrer H."/>
        </authorList>
    </citation>
    <scope>NUCLEOTIDE SEQUENCE [LARGE SCALE GENOMIC DNA]</scope>
    <source>
        <strain>cv. SP-80-3280</strain>
    </source>
</reference>
<comment type="subcellular location">
    <subcellularLocation>
        <location>Plastid</location>
        <location>Chloroplast</location>
    </subcellularLocation>
</comment>
<comment type="similarity">
    <text evidence="1">Belongs to the ycf68 family.</text>
</comment>
<feature type="chain" id="PRO_0000226934" description="Uncharacterized protein ycf68">
    <location>
        <begin position="1"/>
        <end position="134"/>
    </location>
</feature>